<accession>P74257</accession>
<name>GLPD_SYNY3</name>
<evidence type="ECO:0000250" key="1"/>
<evidence type="ECO:0000255" key="2"/>
<evidence type="ECO:0000305" key="3"/>
<feature type="chain" id="PRO_0000126106" description="Glycerol-3-phosphate dehydrogenase">
    <location>
        <begin position="1"/>
        <end position="553"/>
    </location>
</feature>
<feature type="binding site" evidence="2">
    <location>
        <begin position="13"/>
        <end position="41"/>
    </location>
    <ligand>
        <name>FAD</name>
        <dbReference type="ChEBI" id="CHEBI:57692"/>
    </ligand>
</feature>
<dbReference type="EC" id="1.1.5.3"/>
<dbReference type="EMBL" id="BA000022">
    <property type="protein sequence ID" value="BAA18351.1"/>
    <property type="molecule type" value="Genomic_DNA"/>
</dbReference>
<dbReference type="PIR" id="S75892">
    <property type="entry name" value="S75892"/>
</dbReference>
<dbReference type="SMR" id="P74257"/>
<dbReference type="FunCoup" id="P74257">
    <property type="interactions" value="314"/>
</dbReference>
<dbReference type="IntAct" id="P74257">
    <property type="interactions" value="2"/>
</dbReference>
<dbReference type="STRING" id="1148.gene:10499227"/>
<dbReference type="PaxDb" id="1148-1653437"/>
<dbReference type="EnsemblBacteria" id="BAA18351">
    <property type="protein sequence ID" value="BAA18351"/>
    <property type="gene ID" value="BAA18351"/>
</dbReference>
<dbReference type="KEGG" id="syn:sll1085"/>
<dbReference type="eggNOG" id="COG0578">
    <property type="taxonomic scope" value="Bacteria"/>
</dbReference>
<dbReference type="InParanoid" id="P74257"/>
<dbReference type="PhylomeDB" id="P74257"/>
<dbReference type="Proteomes" id="UP000001425">
    <property type="component" value="Chromosome"/>
</dbReference>
<dbReference type="GO" id="GO:0005737">
    <property type="term" value="C:cytoplasm"/>
    <property type="evidence" value="ECO:0007669"/>
    <property type="project" value="UniProtKB-SubCell"/>
</dbReference>
<dbReference type="GO" id="GO:0004368">
    <property type="term" value="F:glycerol-3-phosphate dehydrogenase (quinone) activity"/>
    <property type="evidence" value="ECO:0000318"/>
    <property type="project" value="GO_Central"/>
</dbReference>
<dbReference type="GO" id="GO:0006071">
    <property type="term" value="P:glycerol metabolic process"/>
    <property type="evidence" value="ECO:0007669"/>
    <property type="project" value="UniProtKB-KW"/>
</dbReference>
<dbReference type="GO" id="GO:0046168">
    <property type="term" value="P:glycerol-3-phosphate catabolic process"/>
    <property type="evidence" value="ECO:0000318"/>
    <property type="project" value="GO_Central"/>
</dbReference>
<dbReference type="Gene3D" id="1.10.8.870">
    <property type="entry name" value="Alpha-glycerophosphate oxidase, cap domain"/>
    <property type="match status" value="1"/>
</dbReference>
<dbReference type="Gene3D" id="3.30.9.10">
    <property type="entry name" value="D-Amino Acid Oxidase, subunit A, domain 2"/>
    <property type="match status" value="1"/>
</dbReference>
<dbReference type="Gene3D" id="3.50.50.60">
    <property type="entry name" value="FAD/NAD(P)-binding domain"/>
    <property type="match status" value="1"/>
</dbReference>
<dbReference type="InterPro" id="IPR031656">
    <property type="entry name" value="DAO_C"/>
</dbReference>
<dbReference type="InterPro" id="IPR038299">
    <property type="entry name" value="DAO_C_sf"/>
</dbReference>
<dbReference type="InterPro" id="IPR006076">
    <property type="entry name" value="FAD-dep_OxRdtase"/>
</dbReference>
<dbReference type="InterPro" id="IPR036188">
    <property type="entry name" value="FAD/NAD-bd_sf"/>
</dbReference>
<dbReference type="InterPro" id="IPR000447">
    <property type="entry name" value="G3P_DH_FAD-dep"/>
</dbReference>
<dbReference type="NCBIfam" id="NF008899">
    <property type="entry name" value="PRK12266.1"/>
    <property type="match status" value="1"/>
</dbReference>
<dbReference type="PANTHER" id="PTHR11985">
    <property type="entry name" value="GLYCEROL-3-PHOSPHATE DEHYDROGENASE"/>
    <property type="match status" value="1"/>
</dbReference>
<dbReference type="PANTHER" id="PTHR11985:SF15">
    <property type="entry name" value="GLYCEROL-3-PHOSPHATE DEHYDROGENASE, MITOCHONDRIAL"/>
    <property type="match status" value="1"/>
</dbReference>
<dbReference type="Pfam" id="PF01266">
    <property type="entry name" value="DAO"/>
    <property type="match status" value="1"/>
</dbReference>
<dbReference type="Pfam" id="PF16901">
    <property type="entry name" value="DAO_C"/>
    <property type="match status" value="1"/>
</dbReference>
<dbReference type="PRINTS" id="PR01001">
    <property type="entry name" value="FADG3PDH"/>
</dbReference>
<dbReference type="SUPFAM" id="SSF51905">
    <property type="entry name" value="FAD/NAD(P)-binding domain"/>
    <property type="match status" value="1"/>
</dbReference>
<dbReference type="PROSITE" id="PS00977">
    <property type="entry name" value="FAD_G3PDH_1"/>
    <property type="match status" value="1"/>
</dbReference>
<comment type="catalytic activity">
    <reaction>
        <text>a quinone + sn-glycerol 3-phosphate = dihydroxyacetone phosphate + a quinol</text>
        <dbReference type="Rhea" id="RHEA:18977"/>
        <dbReference type="ChEBI" id="CHEBI:24646"/>
        <dbReference type="ChEBI" id="CHEBI:57597"/>
        <dbReference type="ChEBI" id="CHEBI:57642"/>
        <dbReference type="ChEBI" id="CHEBI:132124"/>
        <dbReference type="EC" id="1.1.5.3"/>
    </reaction>
</comment>
<comment type="cofactor">
    <cofactor evidence="1">
        <name>FAD</name>
        <dbReference type="ChEBI" id="CHEBI:57692"/>
    </cofactor>
</comment>
<comment type="subcellular location">
    <subcellularLocation>
        <location evidence="1">Cytoplasm</location>
    </subcellularLocation>
</comment>
<comment type="similarity">
    <text evidence="3">Belongs to the FAD-dependent glycerol-3-phosphate dehydrogenase family.</text>
</comment>
<proteinExistence type="inferred from homology"/>
<gene>
    <name type="primary">glpD</name>
    <name type="ordered locus">sll1085</name>
</gene>
<reference key="1">
    <citation type="journal article" date="1996" name="DNA Res.">
        <title>Sequence analysis of the genome of the unicellular cyanobacterium Synechocystis sp. strain PCC6803. II. Sequence determination of the entire genome and assignment of potential protein-coding regions.</title>
        <authorList>
            <person name="Kaneko T."/>
            <person name="Sato S."/>
            <person name="Kotani H."/>
            <person name="Tanaka A."/>
            <person name="Asamizu E."/>
            <person name="Nakamura Y."/>
            <person name="Miyajima N."/>
            <person name="Hirosawa M."/>
            <person name="Sugiura M."/>
            <person name="Sasamoto S."/>
            <person name="Kimura T."/>
            <person name="Hosouchi T."/>
            <person name="Matsuno A."/>
            <person name="Muraki A."/>
            <person name="Nakazaki N."/>
            <person name="Naruo K."/>
            <person name="Okumura S."/>
            <person name="Shimpo S."/>
            <person name="Takeuchi C."/>
            <person name="Wada T."/>
            <person name="Watanabe A."/>
            <person name="Yamada M."/>
            <person name="Yasuda M."/>
            <person name="Tabata S."/>
        </authorList>
    </citation>
    <scope>NUCLEOTIDE SEQUENCE [LARGE SCALE GENOMIC DNA]</scope>
    <source>
        <strain>ATCC 27184 / PCC 6803 / Kazusa</strain>
    </source>
</reference>
<organism>
    <name type="scientific">Synechocystis sp. (strain ATCC 27184 / PCC 6803 / Kazusa)</name>
    <dbReference type="NCBI Taxonomy" id="1111708"/>
    <lineage>
        <taxon>Bacteria</taxon>
        <taxon>Bacillati</taxon>
        <taxon>Cyanobacteriota</taxon>
        <taxon>Cyanophyceae</taxon>
        <taxon>Synechococcales</taxon>
        <taxon>Merismopediaceae</taxon>
        <taxon>Synechocystis</taxon>
    </lineage>
</organism>
<keyword id="KW-0963">Cytoplasm</keyword>
<keyword id="KW-0274">FAD</keyword>
<keyword id="KW-0285">Flavoprotein</keyword>
<keyword id="KW-0319">Glycerol metabolism</keyword>
<keyword id="KW-0560">Oxidoreductase</keyword>
<keyword id="KW-1185">Reference proteome</keyword>
<sequence>MRNFPEIQNTAYDLIVIGGGINGVGTARDGALRGLKTLLIEKDDFASGTSSWSTRLIHGGLRYLEYFEFNLVRESLREREVLLHTAPHLVQPLQLTIPVYDWSSRAYWEIQAGMILYDILSFDKTLPSHRMLSPQQFQQLFRAAEKKGLKGGAQYFDGQVEYAERLDLEVTLSAQKAGAAMLNYVAVKGLEKGENNLITAIHCQDQLSGEKFTVNSAQAIVINTTGPWVDEVCGLAHRGGEPVAIVQERKIGGTKGSHIVVDPFPGAPASALYVEAFVDKRPYFIIPWLGKYLIGTTDHRYDGSLDRVKASDDEIDYLIAETNRVMPAAQLTRQDVRFTYSGVRPLPYTDGKKAGSITRNHILYDHSQDGVNNLISLIGGKLTTYRQVGEEMVDKVYGKLRRSAPPCPTLTQPLPGAEAYPLSLETAMDKYGNHLERHSIQHLFCLYGARAGDILALVHGAPELGERIIPSLPDIKAQVVFAVQAEMAHTLVDICRRRTAIAMVTNDYGFSALAGICQTLTDHCGWTQEQCDKQIQKYHEYMEQNCIPDYCLH</sequence>
<protein>
    <recommendedName>
        <fullName>Glycerol-3-phosphate dehydrogenase</fullName>
        <ecNumber>1.1.5.3</ecNumber>
    </recommendedName>
</protein>